<evidence type="ECO:0000250" key="1"/>
<evidence type="ECO:0000256" key="2">
    <source>
        <dbReference type="SAM" id="MobiDB-lite"/>
    </source>
</evidence>
<evidence type="ECO:0000269" key="3">
    <source>
    </source>
</evidence>
<evidence type="ECO:0000305" key="4"/>
<evidence type="ECO:0007829" key="5">
    <source>
        <dbReference type="PDB" id="4M9Q"/>
    </source>
</evidence>
<comment type="function">
    <text evidence="1">Cilium-specific protein required to control the microtubule-based, ciliary axoneme structure. May act by maintaining the association between IFT subcomplexes A and B (By similarity).</text>
</comment>
<comment type="subunit">
    <text evidence="3">Monomer.</text>
</comment>
<comment type="subcellular location">
    <subcellularLocation>
        <location evidence="1">Cell projection</location>
        <location evidence="1">Cilium membrane</location>
    </subcellularLocation>
</comment>
<comment type="domain">
    <text evidence="3">Contains an incomplete active site due to the presence of a Gly residue in position 72 instead of a Gln, probably explaining the inability to hydrolyze GTP.</text>
</comment>
<comment type="similarity">
    <text evidence="4">Belongs to the small GTPase superfamily. Arf family.</text>
</comment>
<name>ARL13_CHLRE</name>
<reference key="1">
    <citation type="journal article" date="2007" name="Science">
        <title>The Chlamydomonas genome reveals the evolution of key animal and plant functions.</title>
        <authorList>
            <person name="Merchant S.S."/>
            <person name="Prochnik S.E."/>
            <person name="Vallon O."/>
            <person name="Harris E.H."/>
            <person name="Karpowicz S.J."/>
            <person name="Witman G.B."/>
            <person name="Terry A."/>
            <person name="Salamov A."/>
            <person name="Fritz-Laylin L.K."/>
            <person name="Marechal-Drouard L."/>
            <person name="Marshall W.F."/>
            <person name="Qu L.H."/>
            <person name="Nelson D.R."/>
            <person name="Sanderfoot A.A."/>
            <person name="Spalding M.H."/>
            <person name="Kapitonov V.V."/>
            <person name="Ren Q."/>
            <person name="Ferris P."/>
            <person name="Lindquist E."/>
            <person name="Shapiro H."/>
            <person name="Lucas S.M."/>
            <person name="Grimwood J."/>
            <person name="Schmutz J."/>
            <person name="Cardol P."/>
            <person name="Cerutti H."/>
            <person name="Chanfreau G."/>
            <person name="Chen C.L."/>
            <person name="Cognat V."/>
            <person name="Croft M.T."/>
            <person name="Dent R."/>
            <person name="Dutcher S."/>
            <person name="Fernandez E."/>
            <person name="Fukuzawa H."/>
            <person name="Gonzalez-Ballester D."/>
            <person name="Gonzalez-Halphen D."/>
            <person name="Hallmann A."/>
            <person name="Hanikenne M."/>
            <person name="Hippler M."/>
            <person name="Inwood W."/>
            <person name="Jabbari K."/>
            <person name="Kalanon M."/>
            <person name="Kuras R."/>
            <person name="Lefebvre P.A."/>
            <person name="Lemaire S.D."/>
            <person name="Lobanov A.V."/>
            <person name="Lohr M."/>
            <person name="Manuell A."/>
            <person name="Meier I."/>
            <person name="Mets L."/>
            <person name="Mittag M."/>
            <person name="Mittelmeier T."/>
            <person name="Moroney J.V."/>
            <person name="Moseley J."/>
            <person name="Napoli C."/>
            <person name="Nedelcu A.M."/>
            <person name="Niyogi K."/>
            <person name="Novoselov S.V."/>
            <person name="Paulsen I.T."/>
            <person name="Pazour G.J."/>
            <person name="Purton S."/>
            <person name="Ral J.P."/>
            <person name="Riano-Pachon D.M."/>
            <person name="Riekhof W."/>
            <person name="Rymarquis L."/>
            <person name="Schroda M."/>
            <person name="Stern D."/>
            <person name="Umen J."/>
            <person name="Willows R."/>
            <person name="Wilson N."/>
            <person name="Zimmer S.L."/>
            <person name="Allmer J."/>
            <person name="Balk J."/>
            <person name="Bisova K."/>
            <person name="Chen C.J."/>
            <person name="Elias M."/>
            <person name="Gendler K."/>
            <person name="Hauser C."/>
            <person name="Lamb M.R."/>
            <person name="Ledford H."/>
            <person name="Long J.C."/>
            <person name="Minagawa J."/>
            <person name="Page M.D."/>
            <person name="Pan J."/>
            <person name="Pootakham W."/>
            <person name="Roje S."/>
            <person name="Rose A."/>
            <person name="Stahlberg E."/>
            <person name="Terauchi A.M."/>
            <person name="Yang P."/>
            <person name="Ball S."/>
            <person name="Bowler C."/>
            <person name="Dieckmann C.L."/>
            <person name="Gladyshev V.N."/>
            <person name="Green P."/>
            <person name="Jorgensen R."/>
            <person name="Mayfield S."/>
            <person name="Mueller-Roeber B."/>
            <person name="Rajamani S."/>
            <person name="Sayre R.T."/>
            <person name="Brokstein P."/>
            <person name="Dubchak I."/>
            <person name="Goodstein D."/>
            <person name="Hornick L."/>
            <person name="Huang Y.W."/>
            <person name="Jhaveri J."/>
            <person name="Luo Y."/>
            <person name="Martinez D."/>
            <person name="Ngau W.C."/>
            <person name="Otillar B."/>
            <person name="Poliakov A."/>
            <person name="Porter A."/>
            <person name="Szajkowski L."/>
            <person name="Werner G."/>
            <person name="Zhou K."/>
            <person name="Grigoriev I.V."/>
            <person name="Rokhsar D.S."/>
            <person name="Grossman A.R."/>
        </authorList>
    </citation>
    <scope>NUCLEOTIDE SEQUENCE [LARGE SCALE GENOMIC DNA]</scope>
    <source>
        <strain>CC-503</strain>
    </source>
</reference>
<reference key="2">
    <citation type="journal article" date="2014" name="Biochem. J.">
        <title>Structural insights into the small G-protein Arl13B and implications for Joubert syndrome.</title>
        <authorList>
            <person name="Miertzschke M."/>
            <person name="Koerner C."/>
            <person name="Spoerner M."/>
            <person name="Wittinghofer A."/>
        </authorList>
    </citation>
    <scope>X-RAY CRYSTALLOGRAPHY (2.50 ANGSTROMS) OF 18-242 IN COMPLEX WITH GTP</scope>
    <scope>SUBUNIT</scope>
</reference>
<dbReference type="EMBL" id="DS496119">
    <property type="protein sequence ID" value="EDP05163.1"/>
    <property type="molecule type" value="Genomic_DNA"/>
</dbReference>
<dbReference type="RefSeq" id="XP_001691430.1">
    <property type="nucleotide sequence ID" value="XM_001691378.1"/>
</dbReference>
<dbReference type="PDB" id="4M9Q">
    <property type="method" value="X-ray"/>
    <property type="resolution" value="2.50 A"/>
    <property type="chains" value="A/B/C=18-242"/>
</dbReference>
<dbReference type="PDB" id="5DI3">
    <property type="method" value="X-ray"/>
    <property type="resolution" value="2.50 A"/>
    <property type="chains" value="B=18-278"/>
</dbReference>
<dbReference type="PDBsum" id="4M9Q"/>
<dbReference type="PDBsum" id="5DI3"/>
<dbReference type="SMR" id="A8INQ0"/>
<dbReference type="PaxDb" id="3055-EDP05163"/>
<dbReference type="GeneID" id="5716967"/>
<dbReference type="KEGG" id="cre:CHLRE_06g301050v5"/>
<dbReference type="eggNOG" id="KOG0074">
    <property type="taxonomic scope" value="Eukaryota"/>
</dbReference>
<dbReference type="HOGENOM" id="CLU_517166_0_0_1"/>
<dbReference type="OrthoDB" id="14717at2759"/>
<dbReference type="EvolutionaryTrace" id="A8INQ0"/>
<dbReference type="GO" id="GO:0060170">
    <property type="term" value="C:ciliary membrane"/>
    <property type="evidence" value="ECO:0007669"/>
    <property type="project" value="UniProtKB-SubCell"/>
</dbReference>
<dbReference type="GO" id="GO:0005525">
    <property type="term" value="F:GTP binding"/>
    <property type="evidence" value="ECO:0007669"/>
    <property type="project" value="UniProtKB-KW"/>
</dbReference>
<dbReference type="GO" id="GO:0003924">
    <property type="term" value="F:GTPase activity"/>
    <property type="evidence" value="ECO:0007669"/>
    <property type="project" value="InterPro"/>
</dbReference>
<dbReference type="CDD" id="cd00878">
    <property type="entry name" value="Arf_Arl"/>
    <property type="match status" value="1"/>
</dbReference>
<dbReference type="FunFam" id="3.40.50.300:FF:001166">
    <property type="entry name" value="ADP-ribosylation factor D"/>
    <property type="match status" value="1"/>
</dbReference>
<dbReference type="Gene3D" id="3.40.50.300">
    <property type="entry name" value="P-loop containing nucleotide triphosphate hydrolases"/>
    <property type="match status" value="1"/>
</dbReference>
<dbReference type="InterPro" id="IPR051995">
    <property type="entry name" value="Ciliary_GTPase"/>
</dbReference>
<dbReference type="InterPro" id="IPR027417">
    <property type="entry name" value="P-loop_NTPase"/>
</dbReference>
<dbReference type="InterPro" id="IPR005225">
    <property type="entry name" value="Small_GTP-bd"/>
</dbReference>
<dbReference type="InterPro" id="IPR006689">
    <property type="entry name" value="Small_GTPase_ARF/SAR"/>
</dbReference>
<dbReference type="NCBIfam" id="TIGR00231">
    <property type="entry name" value="small_GTP"/>
    <property type="match status" value="1"/>
</dbReference>
<dbReference type="PANTHER" id="PTHR46090">
    <property type="entry name" value="ADP-RIBOSYLATION FACTOR-LIKE PROTEIN 13B"/>
    <property type="match status" value="1"/>
</dbReference>
<dbReference type="PANTHER" id="PTHR46090:SF2">
    <property type="entry name" value="ADP-RIBOSYLATION FACTOR-LIKE PROTEIN 13B"/>
    <property type="match status" value="1"/>
</dbReference>
<dbReference type="Pfam" id="PF00025">
    <property type="entry name" value="Arf"/>
    <property type="match status" value="1"/>
</dbReference>
<dbReference type="PRINTS" id="PR00328">
    <property type="entry name" value="SAR1GTPBP"/>
</dbReference>
<dbReference type="SMART" id="SM00177">
    <property type="entry name" value="ARF"/>
    <property type="match status" value="1"/>
</dbReference>
<dbReference type="SMART" id="SM00178">
    <property type="entry name" value="SAR"/>
    <property type="match status" value="1"/>
</dbReference>
<dbReference type="SUPFAM" id="SSF52540">
    <property type="entry name" value="P-loop containing nucleoside triphosphate hydrolases"/>
    <property type="match status" value="1"/>
</dbReference>
<dbReference type="PROSITE" id="PS51417">
    <property type="entry name" value="ARF"/>
    <property type="match status" value="1"/>
</dbReference>
<keyword id="KW-0002">3D-structure</keyword>
<keyword id="KW-1003">Cell membrane</keyword>
<keyword id="KW-0966">Cell projection</keyword>
<keyword id="KW-0969">Cilium</keyword>
<keyword id="KW-0342">GTP-binding</keyword>
<keyword id="KW-0472">Membrane</keyword>
<keyword id="KW-0547">Nucleotide-binding</keyword>
<sequence>MFGLLVNFYRFCRKKTERKITIALLGLDNAGKTTLLNSIQGEVDRDTTPTFGFNSTTLNEGKYKIEVFDLGGGKNIRGVWKKYLAEVHAIVYVVDAADPGRFEESKMTMAEVLENQFMRDKPICIFANKQDLPTAAPAAEVVKGLGLATCRNSHNVFPCTAKMPAGQDVDHRLRDGLKWLVGTVDREFGRLDPRVQTEAEEVRQEEARKKKEREERLRKQREERLRQQKEEEERAREVEKENELHDGKAPSLLAAGGGVVGAAAAGVNGVMVDEQQELRPPGQHQEAPEALGLHNGLALGLPHTIESPGKFPPPPRRPLEAHPASDLRLVAPDQGVSSASGGPGLGAMPSGSHGGGGVPPQPASLPHVRAALPPLPPSAPQPSDAGVGSSGSASRHPGAHSSSAAAPPNVASGAAAEDGPEPDAAGTAAGEAGSGSVFAPRPASAGGGGPGSRGSGSGMTPDARELGSGGVESGEGTPARLRAGAQQASDGGHGNSKGSFSLVHTSNKVVPVAPDLRAGIPGAPNDA</sequence>
<organism>
    <name type="scientific">Chlamydomonas reinhardtii</name>
    <name type="common">Chlamydomonas smithii</name>
    <dbReference type="NCBI Taxonomy" id="3055"/>
    <lineage>
        <taxon>Eukaryota</taxon>
        <taxon>Viridiplantae</taxon>
        <taxon>Chlorophyta</taxon>
        <taxon>core chlorophytes</taxon>
        <taxon>Chlorophyceae</taxon>
        <taxon>CS clade</taxon>
        <taxon>Chlamydomonadales</taxon>
        <taxon>Chlamydomonadaceae</taxon>
        <taxon>Chlamydomonas</taxon>
    </lineage>
</organism>
<accession>A8INQ0</accession>
<protein>
    <recommendedName>
        <fullName>ADP-ribosylation factor-like protein 13B</fullName>
        <shortName>CrArl13B</shortName>
    </recommendedName>
</protein>
<feature type="chain" id="PRO_0000425900" description="ADP-ribosylation factor-like protein 13B">
    <location>
        <begin position="1"/>
        <end position="527"/>
    </location>
</feature>
<feature type="region of interest" description="Disordered" evidence="2">
    <location>
        <begin position="200"/>
        <end position="252"/>
    </location>
</feature>
<feature type="region of interest" description="Disordered" evidence="2">
    <location>
        <begin position="300"/>
        <end position="503"/>
    </location>
</feature>
<feature type="compositionally biased region" description="Basic and acidic residues" evidence="2">
    <location>
        <begin position="200"/>
        <end position="248"/>
    </location>
</feature>
<feature type="compositionally biased region" description="Low complexity" evidence="2">
    <location>
        <begin position="381"/>
        <end position="444"/>
    </location>
</feature>
<feature type="compositionally biased region" description="Gly residues" evidence="2">
    <location>
        <begin position="445"/>
        <end position="457"/>
    </location>
</feature>
<feature type="binding site" evidence="3">
    <location>
        <begin position="26"/>
        <end position="33"/>
    </location>
    <ligand>
        <name>GTP</name>
        <dbReference type="ChEBI" id="CHEBI:37565"/>
    </ligand>
</feature>
<feature type="binding site" evidence="1">
    <location>
        <begin position="69"/>
        <end position="73"/>
    </location>
    <ligand>
        <name>GTP</name>
        <dbReference type="ChEBI" id="CHEBI:37565"/>
    </ligand>
</feature>
<feature type="binding site" evidence="3">
    <location>
        <begin position="128"/>
        <end position="131"/>
    </location>
    <ligand>
        <name>GTP</name>
        <dbReference type="ChEBI" id="CHEBI:37565"/>
    </ligand>
</feature>
<feature type="strand" evidence="5">
    <location>
        <begin position="18"/>
        <end position="25"/>
    </location>
</feature>
<feature type="helix" evidence="5">
    <location>
        <begin position="32"/>
        <end position="39"/>
    </location>
</feature>
<feature type="strand" evidence="5">
    <location>
        <begin position="51"/>
        <end position="60"/>
    </location>
</feature>
<feature type="strand" evidence="5">
    <location>
        <begin position="63"/>
        <end position="70"/>
    </location>
</feature>
<feature type="turn" evidence="5">
    <location>
        <begin position="74"/>
        <end position="76"/>
    </location>
</feature>
<feature type="helix" evidence="5">
    <location>
        <begin position="77"/>
        <end position="86"/>
    </location>
</feature>
<feature type="strand" evidence="5">
    <location>
        <begin position="88"/>
        <end position="95"/>
    </location>
</feature>
<feature type="helix" evidence="5">
    <location>
        <begin position="99"/>
        <end position="101"/>
    </location>
</feature>
<feature type="helix" evidence="5">
    <location>
        <begin position="102"/>
        <end position="114"/>
    </location>
</feature>
<feature type="helix" evidence="5">
    <location>
        <begin position="116"/>
        <end position="118"/>
    </location>
</feature>
<feature type="strand" evidence="5">
    <location>
        <begin position="123"/>
        <end position="128"/>
    </location>
</feature>
<feature type="helix" evidence="5">
    <location>
        <begin position="138"/>
        <end position="144"/>
    </location>
</feature>
<feature type="helix" evidence="5">
    <location>
        <begin position="147"/>
        <end position="149"/>
    </location>
</feature>
<feature type="strand" evidence="5">
    <location>
        <begin position="154"/>
        <end position="158"/>
    </location>
</feature>
<feature type="helix" evidence="5">
    <location>
        <begin position="172"/>
        <end position="205"/>
    </location>
</feature>
<feature type="helix" evidence="5">
    <location>
        <begin position="206"/>
        <end position="210"/>
    </location>
</feature>
<gene>
    <name type="primary">ARL13</name>
    <name type="ORF">CHLREDRAFT_195529</name>
</gene>
<proteinExistence type="evidence at protein level"/>